<proteinExistence type="evidence at protein level"/>
<name>GBX1_HUMAN</name>
<organism>
    <name type="scientific">Homo sapiens</name>
    <name type="common">Human</name>
    <dbReference type="NCBI Taxonomy" id="9606"/>
    <lineage>
        <taxon>Eukaryota</taxon>
        <taxon>Metazoa</taxon>
        <taxon>Chordata</taxon>
        <taxon>Craniata</taxon>
        <taxon>Vertebrata</taxon>
        <taxon>Euteleostomi</taxon>
        <taxon>Mammalia</taxon>
        <taxon>Eutheria</taxon>
        <taxon>Euarchontoglires</taxon>
        <taxon>Primates</taxon>
        <taxon>Haplorrhini</taxon>
        <taxon>Catarrhini</taxon>
        <taxon>Hominidae</taxon>
        <taxon>Homo</taxon>
    </lineage>
</organism>
<evidence type="ECO:0000255" key="1">
    <source>
        <dbReference type="PROSITE-ProRule" id="PRU00108"/>
    </source>
</evidence>
<evidence type="ECO:0000256" key="2">
    <source>
        <dbReference type="SAM" id="MobiDB-lite"/>
    </source>
</evidence>
<evidence type="ECO:0007829" key="3">
    <source>
        <dbReference type="PDB" id="2M34"/>
    </source>
</evidence>
<dbReference type="EMBL" id="AC010973">
    <property type="status" value="NOT_ANNOTATED_CDS"/>
    <property type="molecule type" value="Genomic_DNA"/>
</dbReference>
<dbReference type="EMBL" id="L11239">
    <property type="protein sequence ID" value="AAA36002.1"/>
    <property type="molecule type" value="Genomic_DNA"/>
</dbReference>
<dbReference type="CCDS" id="CCDS43682.1"/>
<dbReference type="PIR" id="S32510">
    <property type="entry name" value="S32510"/>
</dbReference>
<dbReference type="RefSeq" id="NP_001092304.1">
    <property type="nucleotide sequence ID" value="NM_001098834.3"/>
</dbReference>
<dbReference type="PDB" id="2M34">
    <property type="method" value="NMR"/>
    <property type="chains" value="A=256-325"/>
</dbReference>
<dbReference type="PDB" id="2ME0">
    <property type="method" value="NMR"/>
    <property type="chains" value="A=256-325"/>
</dbReference>
<dbReference type="PDB" id="2ME6">
    <property type="method" value="NMR"/>
    <property type="chains" value="A=256-325"/>
</dbReference>
<dbReference type="PDB" id="2N8G">
    <property type="method" value="NMR"/>
    <property type="chains" value="A=256-325"/>
</dbReference>
<dbReference type="PDBsum" id="2M34"/>
<dbReference type="PDBsum" id="2ME0"/>
<dbReference type="PDBsum" id="2ME6"/>
<dbReference type="PDBsum" id="2N8G"/>
<dbReference type="BMRB" id="Q14549"/>
<dbReference type="SMR" id="Q14549"/>
<dbReference type="BioGRID" id="108906">
    <property type="interactions" value="27"/>
</dbReference>
<dbReference type="FunCoup" id="Q14549">
    <property type="interactions" value="1244"/>
</dbReference>
<dbReference type="IntAct" id="Q14549">
    <property type="interactions" value="7"/>
</dbReference>
<dbReference type="STRING" id="9606.ENSP00000297537"/>
<dbReference type="iPTMnet" id="Q14549"/>
<dbReference type="PhosphoSitePlus" id="Q14549"/>
<dbReference type="BioMuta" id="GBX1"/>
<dbReference type="DMDM" id="115502392"/>
<dbReference type="jPOST" id="Q14549"/>
<dbReference type="MassIVE" id="Q14549"/>
<dbReference type="PaxDb" id="9606-ENSP00000297537"/>
<dbReference type="PeptideAtlas" id="Q14549"/>
<dbReference type="Antibodypedia" id="32984">
    <property type="antibodies" value="117 antibodies from 21 providers"/>
</dbReference>
<dbReference type="DNASU" id="2636"/>
<dbReference type="Ensembl" id="ENST00000297537.5">
    <property type="protein sequence ID" value="ENSP00000297537.4"/>
    <property type="gene ID" value="ENSG00000164900.5"/>
</dbReference>
<dbReference type="GeneID" id="2636"/>
<dbReference type="KEGG" id="hsa:2636"/>
<dbReference type="MANE-Select" id="ENST00000297537.5">
    <property type="protein sequence ID" value="ENSP00000297537.4"/>
    <property type="RefSeq nucleotide sequence ID" value="NM_001098834.3"/>
    <property type="RefSeq protein sequence ID" value="NP_001092304.1"/>
</dbReference>
<dbReference type="UCSC" id="uc011kvg.3">
    <property type="organism name" value="human"/>
</dbReference>
<dbReference type="AGR" id="HGNC:4185"/>
<dbReference type="CTD" id="2636"/>
<dbReference type="DisGeNET" id="2636"/>
<dbReference type="GeneCards" id="GBX1"/>
<dbReference type="HGNC" id="HGNC:4185">
    <property type="gene designation" value="GBX1"/>
</dbReference>
<dbReference type="HPA" id="ENSG00000164900">
    <property type="expression patterns" value="Group enriched (skeletal muscle, testis)"/>
</dbReference>
<dbReference type="MIM" id="603354">
    <property type="type" value="gene"/>
</dbReference>
<dbReference type="neXtProt" id="NX_Q14549"/>
<dbReference type="OpenTargets" id="ENSG00000164900"/>
<dbReference type="PharmGKB" id="PA28599"/>
<dbReference type="VEuPathDB" id="HostDB:ENSG00000164900"/>
<dbReference type="eggNOG" id="KOG0489">
    <property type="taxonomic scope" value="Eukaryota"/>
</dbReference>
<dbReference type="GeneTree" id="ENSGT00940000154365"/>
<dbReference type="HOGENOM" id="CLU_052189_0_0_1"/>
<dbReference type="InParanoid" id="Q14549"/>
<dbReference type="OMA" id="CGPLSQK"/>
<dbReference type="OrthoDB" id="6159439at2759"/>
<dbReference type="PAN-GO" id="Q14549">
    <property type="GO annotations" value="5 GO annotations based on evolutionary models"/>
</dbReference>
<dbReference type="PhylomeDB" id="Q14549"/>
<dbReference type="TreeFam" id="TF351530"/>
<dbReference type="PathwayCommons" id="Q14549"/>
<dbReference type="SignaLink" id="Q14549"/>
<dbReference type="BioGRID-ORCS" id="2636">
    <property type="hits" value="9 hits in 1162 CRISPR screens"/>
</dbReference>
<dbReference type="ChiTaRS" id="GBX1">
    <property type="organism name" value="human"/>
</dbReference>
<dbReference type="EvolutionaryTrace" id="Q14549"/>
<dbReference type="GenomeRNAi" id="2636"/>
<dbReference type="Pharos" id="Q14549">
    <property type="development level" value="Tbio"/>
</dbReference>
<dbReference type="PRO" id="PR:Q14549"/>
<dbReference type="Proteomes" id="UP000005640">
    <property type="component" value="Chromosome 7"/>
</dbReference>
<dbReference type="RNAct" id="Q14549">
    <property type="molecule type" value="protein"/>
</dbReference>
<dbReference type="Bgee" id="ENSG00000164900">
    <property type="expression patterns" value="Expressed in right testis and 49 other cell types or tissues"/>
</dbReference>
<dbReference type="GO" id="GO:0000785">
    <property type="term" value="C:chromatin"/>
    <property type="evidence" value="ECO:0000247"/>
    <property type="project" value="NTNU_SB"/>
</dbReference>
<dbReference type="GO" id="GO:0005634">
    <property type="term" value="C:nucleus"/>
    <property type="evidence" value="ECO:0000318"/>
    <property type="project" value="GO_Central"/>
</dbReference>
<dbReference type="GO" id="GO:0000981">
    <property type="term" value="F:DNA-binding transcription factor activity, RNA polymerase II-specific"/>
    <property type="evidence" value="ECO:0000247"/>
    <property type="project" value="NTNU_SB"/>
</dbReference>
<dbReference type="GO" id="GO:0000977">
    <property type="term" value="F:RNA polymerase II transcription regulatory region sequence-specific DNA binding"/>
    <property type="evidence" value="ECO:0000318"/>
    <property type="project" value="GO_Central"/>
</dbReference>
<dbReference type="GO" id="GO:0007628">
    <property type="term" value="P:adult walking behavior"/>
    <property type="evidence" value="ECO:0007669"/>
    <property type="project" value="Ensembl"/>
</dbReference>
<dbReference type="GO" id="GO:0048663">
    <property type="term" value="P:neuron fate commitment"/>
    <property type="evidence" value="ECO:0007669"/>
    <property type="project" value="Ensembl"/>
</dbReference>
<dbReference type="GO" id="GO:0019230">
    <property type="term" value="P:proprioception"/>
    <property type="evidence" value="ECO:0007669"/>
    <property type="project" value="Ensembl"/>
</dbReference>
<dbReference type="GO" id="GO:0051960">
    <property type="term" value="P:regulation of nervous system development"/>
    <property type="evidence" value="ECO:0000318"/>
    <property type="project" value="GO_Central"/>
</dbReference>
<dbReference type="GO" id="GO:0006357">
    <property type="term" value="P:regulation of transcription by RNA polymerase II"/>
    <property type="evidence" value="ECO:0000318"/>
    <property type="project" value="GO_Central"/>
</dbReference>
<dbReference type="GO" id="GO:0097374">
    <property type="term" value="P:sensory neuron axon guidance"/>
    <property type="evidence" value="ECO:0007669"/>
    <property type="project" value="Ensembl"/>
</dbReference>
<dbReference type="GO" id="GO:0021522">
    <property type="term" value="P:spinal cord motor neuron differentiation"/>
    <property type="evidence" value="ECO:0007669"/>
    <property type="project" value="Ensembl"/>
</dbReference>
<dbReference type="CDD" id="cd00086">
    <property type="entry name" value="homeodomain"/>
    <property type="match status" value="1"/>
</dbReference>
<dbReference type="FunFam" id="1.10.10.60:FF:000261">
    <property type="entry name" value="Gastrulation brain homeobox 1"/>
    <property type="match status" value="1"/>
</dbReference>
<dbReference type="Gene3D" id="1.10.10.60">
    <property type="entry name" value="Homeodomain-like"/>
    <property type="match status" value="1"/>
</dbReference>
<dbReference type="InterPro" id="IPR042982">
    <property type="entry name" value="GBX-1/2"/>
</dbReference>
<dbReference type="InterPro" id="IPR001356">
    <property type="entry name" value="HD"/>
</dbReference>
<dbReference type="InterPro" id="IPR020479">
    <property type="entry name" value="HD_metazoa"/>
</dbReference>
<dbReference type="InterPro" id="IPR017970">
    <property type="entry name" value="Homeobox_CS"/>
</dbReference>
<dbReference type="InterPro" id="IPR009057">
    <property type="entry name" value="Homeodomain-like_sf"/>
</dbReference>
<dbReference type="PANTHER" id="PTHR24334">
    <property type="entry name" value="HOMEOBOX PROTEIN GBX"/>
    <property type="match status" value="1"/>
</dbReference>
<dbReference type="PANTHER" id="PTHR24334:SF2">
    <property type="entry name" value="HOMEOBOX PROTEIN GBX-1"/>
    <property type="match status" value="1"/>
</dbReference>
<dbReference type="Pfam" id="PF00046">
    <property type="entry name" value="Homeodomain"/>
    <property type="match status" value="1"/>
</dbReference>
<dbReference type="PRINTS" id="PR00024">
    <property type="entry name" value="HOMEOBOX"/>
</dbReference>
<dbReference type="SMART" id="SM00389">
    <property type="entry name" value="HOX"/>
    <property type="match status" value="1"/>
</dbReference>
<dbReference type="SUPFAM" id="SSF46689">
    <property type="entry name" value="Homeodomain-like"/>
    <property type="match status" value="1"/>
</dbReference>
<dbReference type="PROSITE" id="PS00027">
    <property type="entry name" value="HOMEOBOX_1"/>
    <property type="match status" value="1"/>
</dbReference>
<dbReference type="PROSITE" id="PS50071">
    <property type="entry name" value="HOMEOBOX_2"/>
    <property type="match status" value="1"/>
</dbReference>
<protein>
    <recommendedName>
        <fullName>Homeobox protein GBX-1</fullName>
    </recommendedName>
    <alternativeName>
        <fullName>Gastrulation and brain-specific homeobox protein 1</fullName>
    </alternativeName>
</protein>
<sequence>MQRAGGGSAPGGNGGGGGGGPGTAFSIDSLIGPPPPRSGHLLYTGYPMFMPYRPLVLPQALAPAPLPAGLPPLAPLASFAGRLTNTFCAGLGQAVPSMVALTTALPSFAEPPDAFYGPQELAAAAAAAAATAARNNPEPGGRRPEGGLEADELLPAREKVAEPPPPPPPHFSETFPSLPAEGKVYSSDEEKLEASAGDPAGSEQEEEGSGGDSEDDGFLDSSAGGPGALLGPKPKLKGSLGTGAEEGAPVTAGVTAPGGKSRRRRTAFTSEQLLELEKEFHCKKYLSLTERSQIAHALKLSEVQVKIWFQNRRAKWKRIKAGNVSSRSGEPVRNPKIVVPIPVHVNRFAVRSQHQQMEQGARP</sequence>
<comment type="subcellular location">
    <subcellularLocation>
        <location evidence="1">Nucleus</location>
    </subcellularLocation>
</comment>
<feature type="chain" id="PRO_0000048878" description="Homeobox protein GBX-1">
    <location>
        <begin position="1"/>
        <end position="363"/>
    </location>
</feature>
<feature type="DNA-binding region" description="Homeobox" evidence="1">
    <location>
        <begin position="261"/>
        <end position="320"/>
    </location>
</feature>
<feature type="region of interest" description="Disordered" evidence="2">
    <location>
        <begin position="1"/>
        <end position="31"/>
    </location>
</feature>
<feature type="region of interest" description="Disordered" evidence="2">
    <location>
        <begin position="128"/>
        <end position="265"/>
    </location>
</feature>
<feature type="compositionally biased region" description="Gly residues" evidence="2">
    <location>
        <begin position="1"/>
        <end position="22"/>
    </location>
</feature>
<feature type="compositionally biased region" description="Low complexity" evidence="2">
    <location>
        <begin position="128"/>
        <end position="139"/>
    </location>
</feature>
<feature type="compositionally biased region" description="Acidic residues" evidence="2">
    <location>
        <begin position="203"/>
        <end position="218"/>
    </location>
</feature>
<feature type="compositionally biased region" description="Low complexity" evidence="2">
    <location>
        <begin position="219"/>
        <end position="239"/>
    </location>
</feature>
<feature type="sequence variant" id="VAR_049579" description="In dbSNP:rs11975799.">
    <original>A</original>
    <variation>T</variation>
    <location>
        <position position="194"/>
    </location>
</feature>
<feature type="strand" evidence="3">
    <location>
        <begin position="264"/>
        <end position="268"/>
    </location>
</feature>
<feature type="helix" evidence="3">
    <location>
        <begin position="270"/>
        <end position="282"/>
    </location>
</feature>
<feature type="helix" evidence="3">
    <location>
        <begin position="288"/>
        <end position="297"/>
    </location>
</feature>
<feature type="helix" evidence="3">
    <location>
        <begin position="302"/>
        <end position="320"/>
    </location>
</feature>
<accession>Q14549</accession>
<keyword id="KW-0002">3D-structure</keyword>
<keyword id="KW-0238">DNA-binding</keyword>
<keyword id="KW-0371">Homeobox</keyword>
<keyword id="KW-0539">Nucleus</keyword>
<keyword id="KW-1267">Proteomics identification</keyword>
<keyword id="KW-1185">Reference proteome</keyword>
<keyword id="KW-0804">Transcription</keyword>
<keyword id="KW-0805">Transcription regulation</keyword>
<gene>
    <name type="primary">GBX1</name>
</gene>
<reference key="1">
    <citation type="journal article" date="2003" name="Nature">
        <title>The DNA sequence of human chromosome 7.</title>
        <authorList>
            <person name="Hillier L.W."/>
            <person name="Fulton R.S."/>
            <person name="Fulton L.A."/>
            <person name="Graves T.A."/>
            <person name="Pepin K.H."/>
            <person name="Wagner-McPherson C."/>
            <person name="Layman D."/>
            <person name="Maas J."/>
            <person name="Jaeger S."/>
            <person name="Walker R."/>
            <person name="Wylie K."/>
            <person name="Sekhon M."/>
            <person name="Becker M.C."/>
            <person name="O'Laughlin M.D."/>
            <person name="Schaller M.E."/>
            <person name="Fewell G.A."/>
            <person name="Delehaunty K.D."/>
            <person name="Miner T.L."/>
            <person name="Nash W.E."/>
            <person name="Cordes M."/>
            <person name="Du H."/>
            <person name="Sun H."/>
            <person name="Edwards J."/>
            <person name="Bradshaw-Cordum H."/>
            <person name="Ali J."/>
            <person name="Andrews S."/>
            <person name="Isak A."/>
            <person name="Vanbrunt A."/>
            <person name="Nguyen C."/>
            <person name="Du F."/>
            <person name="Lamar B."/>
            <person name="Courtney L."/>
            <person name="Kalicki J."/>
            <person name="Ozersky P."/>
            <person name="Bielicki L."/>
            <person name="Scott K."/>
            <person name="Holmes A."/>
            <person name="Harkins R."/>
            <person name="Harris A."/>
            <person name="Strong C.M."/>
            <person name="Hou S."/>
            <person name="Tomlinson C."/>
            <person name="Dauphin-Kohlberg S."/>
            <person name="Kozlowicz-Reilly A."/>
            <person name="Leonard S."/>
            <person name="Rohlfing T."/>
            <person name="Rock S.M."/>
            <person name="Tin-Wollam A.-M."/>
            <person name="Abbott A."/>
            <person name="Minx P."/>
            <person name="Maupin R."/>
            <person name="Strowmatt C."/>
            <person name="Latreille P."/>
            <person name="Miller N."/>
            <person name="Johnson D."/>
            <person name="Murray J."/>
            <person name="Woessner J.P."/>
            <person name="Wendl M.C."/>
            <person name="Yang S.-P."/>
            <person name="Schultz B.R."/>
            <person name="Wallis J.W."/>
            <person name="Spieth J."/>
            <person name="Bieri T.A."/>
            <person name="Nelson J.O."/>
            <person name="Berkowicz N."/>
            <person name="Wohldmann P.E."/>
            <person name="Cook L.L."/>
            <person name="Hickenbotham M.T."/>
            <person name="Eldred J."/>
            <person name="Williams D."/>
            <person name="Bedell J.A."/>
            <person name="Mardis E.R."/>
            <person name="Clifton S.W."/>
            <person name="Chissoe S.L."/>
            <person name="Marra M.A."/>
            <person name="Raymond C."/>
            <person name="Haugen E."/>
            <person name="Gillett W."/>
            <person name="Zhou Y."/>
            <person name="James R."/>
            <person name="Phelps K."/>
            <person name="Iadanoto S."/>
            <person name="Bubb K."/>
            <person name="Simms E."/>
            <person name="Levy R."/>
            <person name="Clendenning J."/>
            <person name="Kaul R."/>
            <person name="Kent W.J."/>
            <person name="Furey T.S."/>
            <person name="Baertsch R.A."/>
            <person name="Brent M.R."/>
            <person name="Keibler E."/>
            <person name="Flicek P."/>
            <person name="Bork P."/>
            <person name="Suyama M."/>
            <person name="Bailey J.A."/>
            <person name="Portnoy M.E."/>
            <person name="Torrents D."/>
            <person name="Chinwalla A.T."/>
            <person name="Gish W.R."/>
            <person name="Eddy S.R."/>
            <person name="McPherson J.D."/>
            <person name="Olson M.V."/>
            <person name="Eichler E.E."/>
            <person name="Green E.D."/>
            <person name="Waterston R.H."/>
            <person name="Wilson R.K."/>
        </authorList>
    </citation>
    <scope>NUCLEOTIDE SEQUENCE [LARGE SCALE GENOMIC DNA]</scope>
</reference>
<reference key="2">
    <citation type="journal article" date="1993" name="FEBS Lett.">
        <title>Expression of a novel human homeobox-containing gene that maps to chromosome 7q36.1 in hematopoietic cells.</title>
        <authorList>
            <person name="Matsui T."/>
            <person name="Hirai M."/>
            <person name="Wakita M."/>
            <person name="Hirano M."/>
            <person name="Kurosawa Y."/>
        </authorList>
    </citation>
    <scope>NUCLEOTIDE SEQUENCE [GENOMIC DNA] OF 225-363</scope>
</reference>
<reference key="3">
    <citation type="submission" date="2013-01" db="PDB data bank">
        <title>NMR structure of the homeodomain transcription factor GBX1 from Homo sapiens.</title>
        <authorList>
            <consortium name="Joint center for structural genomics (JCSG)"/>
        </authorList>
    </citation>
    <scope>STRUCTURE BY NMR OF 256-325</scope>
</reference>